<protein>
    <recommendedName>
        <fullName>Sulfite reductase, dissimilatory-type subunit alpha</fullName>
    </recommendedName>
    <alternativeName>
        <fullName>Desulfoviridin subunit alpha</fullName>
    </alternativeName>
    <alternativeName>
        <fullName>Dissimilatory sulfite reductase subunit alpha</fullName>
        <shortName>dSiR alpha</shortName>
    </alternativeName>
    <alternativeName>
        <fullName>Hydrogensulfite reductase subunit alpha</fullName>
    </alternativeName>
</protein>
<accession>P94693</accession>
<dbReference type="EMBL" id="U80961">
    <property type="protein sequence ID" value="AAB41001.1"/>
    <property type="molecule type" value="Genomic_DNA"/>
</dbReference>
<dbReference type="SMR" id="P94693"/>
<dbReference type="STRING" id="1121448.DGI_0691"/>
<dbReference type="GO" id="GO:0051539">
    <property type="term" value="F:4 iron, 4 sulfur cluster binding"/>
    <property type="evidence" value="ECO:0007669"/>
    <property type="project" value="UniProtKB-KW"/>
</dbReference>
<dbReference type="GO" id="GO:0020037">
    <property type="term" value="F:heme binding"/>
    <property type="evidence" value="ECO:0007669"/>
    <property type="project" value="InterPro"/>
</dbReference>
<dbReference type="GO" id="GO:0046872">
    <property type="term" value="F:metal ion binding"/>
    <property type="evidence" value="ECO:0007669"/>
    <property type="project" value="UniProtKB-KW"/>
</dbReference>
<dbReference type="GO" id="GO:0016491">
    <property type="term" value="F:oxidoreductase activity"/>
    <property type="evidence" value="ECO:0007669"/>
    <property type="project" value="InterPro"/>
</dbReference>
<dbReference type="Gene3D" id="3.30.413.10">
    <property type="entry name" value="Sulfite Reductase Hemoprotein, domain 1"/>
    <property type="match status" value="1"/>
</dbReference>
<dbReference type="InterPro" id="IPR017896">
    <property type="entry name" value="4Fe4S_Fe-S-bd"/>
</dbReference>
<dbReference type="InterPro" id="IPR006067">
    <property type="entry name" value="NO2/SO3_Rdtase_4Fe4S_dom"/>
</dbReference>
<dbReference type="InterPro" id="IPR045854">
    <property type="entry name" value="NO2/SO3_Rdtase_4Fe4S_sf"/>
</dbReference>
<dbReference type="Pfam" id="PF01077">
    <property type="entry name" value="NIR_SIR"/>
    <property type="match status" value="1"/>
</dbReference>
<dbReference type="SUPFAM" id="SSF56014">
    <property type="entry name" value="Nitrite and sulphite reductase 4Fe-4S domain-like"/>
    <property type="match status" value="1"/>
</dbReference>
<dbReference type="PROSITE" id="PS51379">
    <property type="entry name" value="4FE4S_FER_2"/>
    <property type="match status" value="1"/>
</dbReference>
<evidence type="ECO:0000250" key="1">
    <source>
        <dbReference type="UniProtKB" id="P45574"/>
    </source>
</evidence>
<evidence type="ECO:0000255" key="2">
    <source>
        <dbReference type="PROSITE-ProRule" id="PRU00711"/>
    </source>
</evidence>
<reference key="1">
    <citation type="submission" date="1996-12" db="EMBL/GenBank/DDBJ databases">
        <authorList>
            <person name="Hipp W.M."/>
            <person name="Trueper H.G."/>
        </authorList>
    </citation>
    <scope>NUCLEOTIDE SEQUENCE [GENOMIC DNA]</scope>
    <source>
        <strain>ATCC 19364 / DSM 1382 / NCIMB 9332 / VKM B-1759</strain>
    </source>
</reference>
<feature type="chain" id="PRO_0000080029" description="Sulfite reductase, dissimilatory-type subunit alpha">
    <location>
        <begin position="1" status="less than"/>
        <end position="198"/>
    </location>
</feature>
<feature type="domain" description="4Fe-4S ferredoxin-type" evidence="2">
    <location>
        <begin position="55"/>
        <end position="83"/>
    </location>
</feature>
<feature type="binding site" evidence="1">
    <location>
        <position position="45"/>
    </location>
    <ligand>
        <name>[4Fe-4S] cluster</name>
        <dbReference type="ChEBI" id="CHEBI:49883"/>
        <label>2</label>
    </ligand>
</feature>
<feature type="binding site" evidence="1">
    <location>
        <position position="64"/>
    </location>
    <ligand>
        <name>[4Fe-4S] cluster</name>
        <dbReference type="ChEBI" id="CHEBI:49883"/>
        <label>2</label>
    </ligand>
</feature>
<feature type="binding site" evidence="1">
    <location>
        <position position="67"/>
    </location>
    <ligand>
        <name>[4Fe-4S] cluster</name>
        <dbReference type="ChEBI" id="CHEBI:49883"/>
        <label>2</label>
    </ligand>
</feature>
<feature type="binding site" evidence="1">
    <location>
        <position position="70"/>
    </location>
    <ligand>
        <name>[4Fe-4S] cluster</name>
        <dbReference type="ChEBI" id="CHEBI:49883"/>
        <label>2</label>
    </ligand>
</feature>
<feature type="non-terminal residue">
    <location>
        <position position="1"/>
    </location>
</feature>
<sequence>WKDDIKIDQEAVKAYVGGEFKPNAGAHAGRDWGKFDIEAEVVGLCPTGCMTYESGTLSIDNKNCTRCMHCINTMPRALKIGDERGASILVGAKAPVLDGAQMGSLLIPFIAAEEPFDEVKEVIENIWEWWMEEGKNRERLGETMKRVGFQKLLEVTGTKAVPQHVSEPRHNPYIFFKEEEVPGGWSRDISDYRKRHMR</sequence>
<name>DSVA_MEGG1</name>
<proteinExistence type="inferred from homology"/>
<keyword id="KW-0004">4Fe-4S</keyword>
<keyword id="KW-0408">Iron</keyword>
<keyword id="KW-0411">Iron-sulfur</keyword>
<keyword id="KW-0479">Metal-binding</keyword>
<comment type="function">
    <text evidence="1">Part of the complex that catalyzes the reduction of sulfite to sulfide. The alpha and beta subunits may have arisen by gene duplication. They both bind 2 iron-sulfur clusters, but the alpha subunit seems to be catalytically inactive, due to substitutions along the putative substrate access channel, and because it binds sirohydrochlorin (the dematallated form of siroheme) instead of siroheme.</text>
</comment>
<comment type="subunit">
    <text evidence="1">Heterohexamer of two alpha, two beta and two gamma subunits.</text>
</comment>
<gene>
    <name type="primary">dsrA</name>
</gene>
<organism>
    <name type="scientific">Megalodesulfovibrio gigas (strain ATCC 19364 / DSM 1382 / NCIMB 9332 / VKM B-1759)</name>
    <name type="common">Desulfovibrio gigas</name>
    <dbReference type="NCBI Taxonomy" id="1121448"/>
    <lineage>
        <taxon>Bacteria</taxon>
        <taxon>Pseudomonadati</taxon>
        <taxon>Thermodesulfobacteriota</taxon>
        <taxon>Desulfovibrionia</taxon>
        <taxon>Desulfovibrionales</taxon>
        <taxon>Desulfovibrionaceae</taxon>
        <taxon>Megalodesulfovibrio</taxon>
    </lineage>
</organism>